<gene>
    <name evidence="8 10" type="primary">D7L2</name>
    <name evidence="13" type="ORF">AAEL006417</name>
</gene>
<name>D7L2_AEDAE</name>
<protein>
    <recommendedName>
        <fullName>Long form salivary protein D7L2</fullName>
        <shortName evidence="9 10">AeD7L2</shortName>
    </recommendedName>
</protein>
<evidence type="ECO:0000250" key="1">
    <source>
        <dbReference type="UniProtKB" id="P18153"/>
    </source>
</evidence>
<evidence type="ECO:0000255" key="2"/>
<evidence type="ECO:0000269" key="3">
    <source>
    </source>
</evidence>
<evidence type="ECO:0000269" key="4">
    <source>
    </source>
</evidence>
<evidence type="ECO:0000269" key="5">
    <source>
    </source>
</evidence>
<evidence type="ECO:0000269" key="6">
    <source>
    </source>
</evidence>
<evidence type="ECO:0000269" key="7">
    <source>
    </source>
</evidence>
<evidence type="ECO:0000303" key="8">
    <source>
    </source>
</evidence>
<evidence type="ECO:0000303" key="9">
    <source>
    </source>
</evidence>
<evidence type="ECO:0000303" key="10">
    <source>
    </source>
</evidence>
<evidence type="ECO:0000305" key="11"/>
<evidence type="ECO:0000312" key="12">
    <source>
        <dbReference type="EMBL" id="ABM68615.1"/>
    </source>
</evidence>
<evidence type="ECO:0000312" key="13">
    <source>
        <dbReference type="EMBL" id="EAT41993.1"/>
    </source>
</evidence>
<evidence type="ECO:0000312" key="14">
    <source>
        <dbReference type="Proteomes" id="UP000008820"/>
    </source>
</evidence>
<reference evidence="12" key="1">
    <citation type="journal article" date="2007" name="Genome Biol.">
        <title>Analysis of 14 BAC sequences from the Aedes aegypti genome: a benchmark for genome annotation and assembly.</title>
        <authorList>
            <person name="Lobo N.F."/>
            <person name="Campbell K.S."/>
            <person name="Thaner D."/>
            <person name="Debruyn B."/>
            <person name="Koo H."/>
            <person name="Gelbart W.M."/>
            <person name="Loftus B.J."/>
            <person name="Severson D.W."/>
            <person name="Collins F.H."/>
        </authorList>
    </citation>
    <scope>NUCLEOTIDE SEQUENCE [LARGE SCALE GENOMIC DNA]</scope>
</reference>
<reference evidence="13" key="2">
    <citation type="journal article" date="2007" name="Science">
        <title>Genome sequence of Aedes aegypti, a major arbovirus vector.</title>
        <authorList>
            <person name="Nene V."/>
            <person name="Wortman J.R."/>
            <person name="Lawson D."/>
            <person name="Haas B.J."/>
            <person name="Kodira C.D."/>
            <person name="Tu Z.J."/>
            <person name="Loftus B.J."/>
            <person name="Xi Z."/>
            <person name="Megy K."/>
            <person name="Grabherr M."/>
            <person name="Ren Q."/>
            <person name="Zdobnov E.M."/>
            <person name="Lobo N.F."/>
            <person name="Campbell K.S."/>
            <person name="Brown S.E."/>
            <person name="Bonaldo M.F."/>
            <person name="Zhu J."/>
            <person name="Sinkins S.P."/>
            <person name="Hogenkamp D.G."/>
            <person name="Amedeo P."/>
            <person name="Arensburger P."/>
            <person name="Atkinson P.W."/>
            <person name="Bidwell S.L."/>
            <person name="Biedler J."/>
            <person name="Birney E."/>
            <person name="Bruggner R.V."/>
            <person name="Costas J."/>
            <person name="Coy M.R."/>
            <person name="Crabtree J."/>
            <person name="Crawford M."/>
            <person name="DeBruyn B."/>
            <person name="DeCaprio D."/>
            <person name="Eiglmeier K."/>
            <person name="Eisenstadt E."/>
            <person name="El-Dorry H."/>
            <person name="Gelbart W.M."/>
            <person name="Gomes S.L."/>
            <person name="Hammond M."/>
            <person name="Hannick L.I."/>
            <person name="Hogan J.R."/>
            <person name="Holmes M.H."/>
            <person name="Jaffe D."/>
            <person name="Johnston S.J."/>
            <person name="Kennedy R.C."/>
            <person name="Koo H."/>
            <person name="Kravitz S."/>
            <person name="Kriventseva E.V."/>
            <person name="Kulp D."/>
            <person name="Labutti K."/>
            <person name="Lee E."/>
            <person name="Li S."/>
            <person name="Lovin D.D."/>
            <person name="Mao C."/>
            <person name="Mauceli E."/>
            <person name="Menck C.F."/>
            <person name="Miller J.R."/>
            <person name="Montgomery P."/>
            <person name="Mori A."/>
            <person name="Nascimento A.L."/>
            <person name="Naveira H.F."/>
            <person name="Nusbaum C."/>
            <person name="O'Leary S.B."/>
            <person name="Orvis J."/>
            <person name="Pertea M."/>
            <person name="Quesneville H."/>
            <person name="Reidenbach K.R."/>
            <person name="Rogers Y.-H.C."/>
            <person name="Roth C.W."/>
            <person name="Schneider J.R."/>
            <person name="Schatz M."/>
            <person name="Shumway M."/>
            <person name="Stanke M."/>
            <person name="Stinson E.O."/>
            <person name="Tubio J.M.C."/>
            <person name="Vanzee J.P."/>
            <person name="Verjovski-Almeida S."/>
            <person name="Werner D."/>
            <person name="White O.R."/>
            <person name="Wyder S."/>
            <person name="Zeng Q."/>
            <person name="Zhao Q."/>
            <person name="Zhao Y."/>
            <person name="Hill C.A."/>
            <person name="Raikhel A.S."/>
            <person name="Soares M.B."/>
            <person name="Knudson D.L."/>
            <person name="Lee N.H."/>
            <person name="Galagan J."/>
            <person name="Salzberg S.L."/>
            <person name="Paulsen I.T."/>
            <person name="Dimopoulos G."/>
            <person name="Collins F.H."/>
            <person name="Bruce B."/>
            <person name="Fraser-Liggett C.M."/>
            <person name="Severson D.W."/>
        </authorList>
    </citation>
    <scope>NUCLEOTIDE SEQUENCE [LARGE SCALE GENOMIC DNA]</scope>
    <source>
        <strain evidence="13">Liverpool</strain>
    </source>
</reference>
<reference evidence="14" key="3">
    <citation type="submission" date="2017-06" db="EMBL/GenBank/DDBJ databases">
        <title>Aedes aegypti genome working group (AGWG) sequencing and assembly.</title>
        <authorList>
            <consortium name="Aedes aegypti Genome Working Group (AGWG)"/>
            <person name="Matthews B.J."/>
        </authorList>
    </citation>
    <scope>NUCLEOTIDE SEQUENCE [LARGE SCALE GENOMIC DNA]</scope>
    <source>
        <strain evidence="14">LVP_AGWG</strain>
    </source>
</reference>
<reference evidence="11" key="4">
    <citation type="journal article" date="2016" name="PLoS Negl. Trop. Dis.">
        <title>Aedes aegypti D7 Saliva Protein Inhibits Dengue Virus Infection.</title>
        <authorList>
            <person name="Conway M.J."/>
            <person name="Londono-Renteria B."/>
            <person name="Troupin A."/>
            <person name="Watson A.M."/>
            <person name="Klimstra W.B."/>
            <person name="Fikrig E."/>
            <person name="Colpitts T.M."/>
        </authorList>
    </citation>
    <scope>IDENTIFICATION BY MASS SPECTROMETRY</scope>
    <scope>SUBCELLULAR LOCATION</scope>
    <scope>TISSUE SPECIFICITY</scope>
</reference>
<reference key="5">
    <citation type="journal article" date="2019" name="Insect Biochem. Mol. Biol.">
        <title>A salivary protein of Aedes aegypti promotes dengue-2 virus replication and transmission.</title>
        <authorList>
            <person name="Sri-In C."/>
            <person name="Weng S.C."/>
            <person name="Chen W.Y."/>
            <person name="Wu-Hsieh B.A."/>
            <person name="Tu W.C."/>
            <person name="Shiao S.H."/>
        </authorList>
    </citation>
    <scope>INDUCTION (MICROBIAL INFECTION)</scope>
    <scope>DISRUPTION PHENOTYPE (MICROBIAL INFECTION)</scope>
</reference>
<reference evidence="11" key="6">
    <citation type="journal article" date="2021" name="FEBS J.">
        <title>Biochemical characterization of AeD7L2 and its physiological relevance in blood feeding in the dengue mosquito vector, Aedes aegypti.</title>
        <authorList>
            <person name="Martin-Martin I."/>
            <person name="Kern O."/>
            <person name="Brooks S."/>
            <person name="Smith L.B."/>
            <person name="Valenzuela-Leon P.C."/>
            <person name="Bonilla B."/>
            <person name="Ackerman H."/>
            <person name="Calvo E."/>
        </authorList>
    </citation>
    <scope>FUNCTION</scope>
    <scope>TISSUE SPECIFICITY</scope>
</reference>
<reference key="7">
    <citation type="journal article" date="2022" name="PLoS Negl. Trop. Dis.">
        <title>Identification of Aedes aegypti salivary gland proteins interacting with human immune receptor proteins.</title>
        <authorList>
            <person name="Gavor E."/>
            <person name="Choong Y.K."/>
            <person name="Liu Y."/>
            <person name="Pompon J."/>
            <person name="Ooi E.E."/>
            <person name="Mok Y.K."/>
            <person name="Liu H."/>
            <person name="Kini R.M."/>
            <person name="Sivaraman J."/>
        </authorList>
    </citation>
    <scope>INTERACTION WITH HUMAN CD4</scope>
</reference>
<reference evidence="11" key="8">
    <citation type="journal article" date="2023" name="MBio">
        <title>Aedes aegypti D7 long salivary proteins modulate blood feeding and parasite infection.</title>
        <authorList>
            <person name="Martin-Martin I."/>
            <person name="Kojin B.B."/>
            <person name="Aryan A."/>
            <person name="Williams A.E."/>
            <person name="Molina-Cruz A."/>
            <person name="Valenzuela-Leon P.C."/>
            <person name="Shrivastava G."/>
            <person name="Botello K."/>
            <person name="Minai M."/>
            <person name="Adelman Z.N."/>
            <person name="Calvo E."/>
        </authorList>
    </citation>
    <scope>FUNCTION</scope>
    <scope>FUNCTION (MICROBIAL INFECTION)</scope>
    <scope>DISRUPTION PHENOTYPE</scope>
    <scope>DISRUPTION PHENOTYPE (MICROBIAL INFECTION)</scope>
    <source>
        <strain evidence="10">Liverpool</strain>
    </source>
</reference>
<comment type="function">
    <text evidence="5 7">Modulates blood feeding of female mosquitoes on vertebrate species by binding and sequestering different mediators involved in the host response, such as biogenic amines and eicosanoids (PubMed:32799410, PubMed:37909749). Binds serotonin, histamine, tryptamine, noradrenaline, leukotriene B4, leukotriene C4, leukotriene D4, leukotriene E4 and U-46619, a stable analog of thromboxane A2 (PubMed:32799410). Does not bind adrenaline (PubMed:32799410). Exhibits vasodilating activity (PubMed:32799410). Inhibits agonist-induced platelet aggregation but not blood clotting (PubMed:32799410).</text>
</comment>
<comment type="function">
    <text evidence="7">(Microbial infection) Probably promotes Plasmodium gallinaceum oocyst development in mosquito midgut.</text>
</comment>
<comment type="subunit">
    <text evidence="6">Interacts with human CD4.</text>
</comment>
<comment type="subcellular location">
    <subcellularLocation>
        <location evidence="3">Secreted</location>
    </subcellularLocation>
</comment>
<comment type="tissue specificity">
    <text evidence="3 5">Saliva (at protein level) (PubMed:27632170). Female salivary gland (at protein level) (PubMed:27632170). Detected in the head and thorax of the female mosquitoes, where the salivary glands are located (PubMed:32799410).</text>
</comment>
<comment type="induction">
    <text evidence="4">(Microbial infection) Up-regulated in salivary glands following dengue virus type 2 infection.</text>
</comment>
<comment type="domain">
    <text evidence="1">Lipids and biogenic amines bind independently through different binding pockets, with lipids binding to the N-terminal pocket and biogenic amines to the C-terminal pocket.</text>
</comment>
<comment type="disruption phenotype">
    <text evidence="7">Mosquitoes show longer probing times when fed on mouse or chicken but not when using an artificial membrane feeder or mice deficient in leukotrienes (PubMed:37909749). Reduced blood-feeding success, defined as the percentage of engorged mosquitoes after a fixed amount of time, when fed on vertebrate hosts (PubMed:37909749).</text>
</comment>
<comment type="disruption phenotype">
    <text evidence="7">(Microbial infection) Significant reduction in the numbers of oocysts in the mosquito midgut after infection with Plasmodium gallinaceum, the causative agent of avian malaria.</text>
</comment>
<comment type="disruption phenotype">
    <text evidence="4">(Microbial infection) RNAi-mediated knockdown does not affect dengue virus type 2 replication in salivary glands after infection.</text>
</comment>
<comment type="similarity">
    <text evidence="11">Belongs to the PBP/GOBP family.</text>
</comment>
<feature type="signal peptide" evidence="2">
    <location>
        <begin position="1"/>
        <end position="21"/>
    </location>
</feature>
<feature type="chain" id="PRO_5014306752" description="Long form salivary protein D7L2" evidence="2">
    <location>
        <begin position="22"/>
        <end position="332"/>
    </location>
</feature>
<feature type="binding site" evidence="1">
    <location>
        <position position="61"/>
    </location>
    <ligand>
        <name>leukotriene E4</name>
        <dbReference type="ChEBI" id="CHEBI:57462"/>
    </ligand>
</feature>
<feature type="binding site" evidence="1">
    <location>
        <position position="157"/>
    </location>
    <ligand>
        <name>leukotriene E4</name>
        <dbReference type="ChEBI" id="CHEBI:57462"/>
    </ligand>
</feature>
<feature type="binding site" evidence="1">
    <location>
        <position position="176"/>
    </location>
    <ligand>
        <name>leukotriene E4</name>
        <dbReference type="ChEBI" id="CHEBI:57462"/>
    </ligand>
</feature>
<feature type="binding site" evidence="1">
    <location>
        <position position="185"/>
    </location>
    <ligand>
        <name>noradrenaline</name>
        <dbReference type="ChEBI" id="CHEBI:166902"/>
    </ligand>
</feature>
<feature type="binding site" evidence="1">
    <location>
        <position position="203"/>
    </location>
    <ligand>
        <name>noradrenaline</name>
        <dbReference type="ChEBI" id="CHEBI:166902"/>
    </ligand>
</feature>
<feature type="binding site" evidence="1">
    <location>
        <position position="216"/>
    </location>
    <ligand>
        <name>noradrenaline</name>
        <dbReference type="ChEBI" id="CHEBI:166902"/>
    </ligand>
</feature>
<feature type="binding site" evidence="1">
    <location>
        <position position="294"/>
    </location>
    <ligand>
        <name>noradrenaline</name>
        <dbReference type="ChEBI" id="CHEBI:166902"/>
    </ligand>
</feature>
<feature type="binding site" evidence="1">
    <location>
        <position position="297"/>
    </location>
    <ligand>
        <name>noradrenaline</name>
        <dbReference type="ChEBI" id="CHEBI:166902"/>
    </ligand>
</feature>
<feature type="disulfide bond" evidence="1">
    <location>
        <begin position="40"/>
        <end position="77"/>
    </location>
</feature>
<feature type="disulfide bond" evidence="1">
    <location>
        <begin position="73"/>
        <end position="133"/>
    </location>
</feature>
<feature type="disulfide bond" evidence="1">
    <location>
        <begin position="184"/>
        <end position="219"/>
    </location>
</feature>
<feature type="disulfide bond" evidence="1">
    <location>
        <begin position="200"/>
        <end position="331"/>
    </location>
</feature>
<feature type="disulfide bond" evidence="1">
    <location>
        <begin position="259"/>
        <end position="278"/>
    </location>
</feature>
<sequence>MFPPRKFLLSSFILAALHVTAAPLWDAKDPEQLRFITSRCMEDWYPKAKNPKAALQNWLGWKLEPSDDQATQCYTKCVLEKIGFYEPGEKRFKGVRVMQQWETFHKYLNADREKVHDLTSTFDFIPPLKSSSCSEVFEAFKKVNGKHSETIRAILFGKGESSKKYYQEKGVKIKQKEQSLFMHCEALNYPKGSPQRKDLCGIRKYQMGSGIVFERHMECIFKGLRYMTSKNELDVDEIARDFIVVKKKPDAMKAMMKTCKANLKEKNPGKIAVHYYKCLMNDSKVTNDFKEAFDYREVRSKDYFAALTGKLKPYSRSDVRKQVDDIDKIQCS</sequence>
<accession>Q0IF93</accession>
<accession>A0A1S4FDI7</accession>
<keyword id="KW-1015">Disulfide bond</keyword>
<keyword id="KW-1199">Hemostasis impairing toxin</keyword>
<keyword id="KW-1201">Platelet aggregation inhibiting toxin</keyword>
<keyword id="KW-1185">Reference proteome</keyword>
<keyword id="KW-0964">Secreted</keyword>
<keyword id="KW-0732">Signal</keyword>
<keyword id="KW-0800">Toxin</keyword>
<keyword id="KW-0838">Vasoactive</keyword>
<keyword id="KW-0840">Vasodilator</keyword>
<organism evidence="14">
    <name type="scientific">Aedes aegypti</name>
    <name type="common">Yellowfever mosquito</name>
    <name type="synonym">Culex aegypti</name>
    <dbReference type="NCBI Taxonomy" id="7159"/>
    <lineage>
        <taxon>Eukaryota</taxon>
        <taxon>Metazoa</taxon>
        <taxon>Ecdysozoa</taxon>
        <taxon>Arthropoda</taxon>
        <taxon>Hexapoda</taxon>
        <taxon>Insecta</taxon>
        <taxon>Pterygota</taxon>
        <taxon>Neoptera</taxon>
        <taxon>Endopterygota</taxon>
        <taxon>Diptera</taxon>
        <taxon>Nematocera</taxon>
        <taxon>Culicoidea</taxon>
        <taxon>Culicidae</taxon>
        <taxon>Culicinae</taxon>
        <taxon>Aedini</taxon>
        <taxon>Aedes</taxon>
        <taxon>Stegomyia</taxon>
    </lineage>
</organism>
<proteinExistence type="evidence at protein level"/>
<dbReference type="EMBL" id="EF173376">
    <property type="protein sequence ID" value="ABM68615.1"/>
    <property type="molecule type" value="Genomic_DNA"/>
</dbReference>
<dbReference type="EMBL" id="CH477389">
    <property type="protein sequence ID" value="EAT41993.1"/>
    <property type="molecule type" value="Genomic_DNA"/>
</dbReference>
<dbReference type="SMR" id="Q0IF93"/>
<dbReference type="STRING" id="7159.AAEL006417-PA"/>
<dbReference type="PaxDb" id="7159-AAEL006417-PA"/>
<dbReference type="EnsemblMetazoa" id="AAEL006417-RA">
    <property type="protein sequence ID" value="AAEL006417-PA"/>
    <property type="gene ID" value="AAEL006417"/>
</dbReference>
<dbReference type="GeneID" id="5567956"/>
<dbReference type="KEGG" id="aag:5567956"/>
<dbReference type="VEuPathDB" id="VectorBase:AAEL006417"/>
<dbReference type="eggNOG" id="ENOG502T82F">
    <property type="taxonomic scope" value="Eukaryota"/>
</dbReference>
<dbReference type="HOGENOM" id="CLU_077766_0_0_1"/>
<dbReference type="InParanoid" id="Q0IF93"/>
<dbReference type="OMA" id="NDETTHC"/>
<dbReference type="OrthoDB" id="7722701at2759"/>
<dbReference type="Proteomes" id="UP000008820">
    <property type="component" value="Chromosome 2"/>
</dbReference>
<dbReference type="Proteomes" id="UP000682892">
    <property type="component" value="Chromosome 2"/>
</dbReference>
<dbReference type="GO" id="GO:0005615">
    <property type="term" value="C:extracellular space"/>
    <property type="evidence" value="ECO:0007669"/>
    <property type="project" value="TreeGrafter"/>
</dbReference>
<dbReference type="GO" id="GO:0005549">
    <property type="term" value="F:odorant binding"/>
    <property type="evidence" value="ECO:0007669"/>
    <property type="project" value="InterPro"/>
</dbReference>
<dbReference type="GO" id="GO:0090729">
    <property type="term" value="F:toxin activity"/>
    <property type="evidence" value="ECO:0007669"/>
    <property type="project" value="UniProtKB-KW"/>
</dbReference>
<dbReference type="GO" id="GO:0007608">
    <property type="term" value="P:sensory perception of smell"/>
    <property type="evidence" value="ECO:0007669"/>
    <property type="project" value="TreeGrafter"/>
</dbReference>
<dbReference type="GO" id="GO:0042311">
    <property type="term" value="P:vasodilation"/>
    <property type="evidence" value="ECO:0007669"/>
    <property type="project" value="UniProtKB-KW"/>
</dbReference>
<dbReference type="CDD" id="cd23992">
    <property type="entry name" value="PBP_GOBP"/>
    <property type="match status" value="1"/>
</dbReference>
<dbReference type="Gene3D" id="1.10.238.20">
    <property type="entry name" value="Pheromone/general odorant binding protein domain"/>
    <property type="match status" value="2"/>
</dbReference>
<dbReference type="InterPro" id="IPR006170">
    <property type="entry name" value="PBP/GOBP"/>
</dbReference>
<dbReference type="InterPro" id="IPR036728">
    <property type="entry name" value="PBP_GOBP_sf"/>
</dbReference>
<dbReference type="PANTHER" id="PTHR11857:SF43">
    <property type="entry name" value="GEO07291P1-RELATED"/>
    <property type="match status" value="1"/>
</dbReference>
<dbReference type="PANTHER" id="PTHR11857">
    <property type="entry name" value="ODORANT BINDING PROTEIN-RELATED"/>
    <property type="match status" value="1"/>
</dbReference>
<dbReference type="Pfam" id="PF01395">
    <property type="entry name" value="PBP_GOBP"/>
    <property type="match status" value="2"/>
</dbReference>
<dbReference type="SUPFAM" id="SSF47565">
    <property type="entry name" value="Insect pheromone/odorant-binding proteins"/>
    <property type="match status" value="2"/>
</dbReference>